<name>LPXH_ESCF3</name>
<comment type="function">
    <text evidence="1">Hydrolyzes the pyrophosphate bond of UDP-2,3-diacylglucosamine to yield 2,3-diacylglucosamine 1-phosphate (lipid X) and UMP by catalyzing the attack of water at the alpha-P atom. Involved in the biosynthesis of lipid A, a phosphorylated glycolipid that anchors the lipopolysaccharide to the outer membrane of the cell.</text>
</comment>
<comment type="catalytic activity">
    <reaction evidence="1">
        <text>UDP-2-N,3-O-bis[(3R)-3-hydroxytetradecanoyl]-alpha-D-glucosamine + H2O = 2-N,3-O-bis[(3R)-3-hydroxytetradecanoyl]-alpha-D-glucosaminyl 1-phosphate + UMP + 2 H(+)</text>
        <dbReference type="Rhea" id="RHEA:25213"/>
        <dbReference type="ChEBI" id="CHEBI:15377"/>
        <dbReference type="ChEBI" id="CHEBI:15378"/>
        <dbReference type="ChEBI" id="CHEBI:57865"/>
        <dbReference type="ChEBI" id="CHEBI:57957"/>
        <dbReference type="ChEBI" id="CHEBI:78847"/>
        <dbReference type="EC" id="3.6.1.54"/>
    </reaction>
</comment>
<comment type="cofactor">
    <cofactor evidence="1">
        <name>Mn(2+)</name>
        <dbReference type="ChEBI" id="CHEBI:29035"/>
    </cofactor>
    <text evidence="1">Binds 2 Mn(2+) ions per subunit in a binuclear metal center.</text>
</comment>
<comment type="pathway">
    <text evidence="1">Glycolipid biosynthesis; lipid IV(A) biosynthesis; lipid IV(A) from (3R)-3-hydroxytetradecanoyl-[acyl-carrier-protein] and UDP-N-acetyl-alpha-D-glucosamine: step 4/6.</text>
</comment>
<comment type="subcellular location">
    <subcellularLocation>
        <location evidence="1">Cell inner membrane</location>
        <topology evidence="1">Peripheral membrane protein</topology>
        <orientation evidence="1">Cytoplasmic side</orientation>
    </subcellularLocation>
</comment>
<comment type="similarity">
    <text evidence="1">Belongs to the LpxH family.</text>
</comment>
<keyword id="KW-0997">Cell inner membrane</keyword>
<keyword id="KW-1003">Cell membrane</keyword>
<keyword id="KW-0378">Hydrolase</keyword>
<keyword id="KW-0441">Lipid A biosynthesis</keyword>
<keyword id="KW-0444">Lipid biosynthesis</keyword>
<keyword id="KW-0443">Lipid metabolism</keyword>
<keyword id="KW-0464">Manganese</keyword>
<keyword id="KW-0472">Membrane</keyword>
<keyword id="KW-0479">Metal-binding</keyword>
<gene>
    <name evidence="1" type="primary">lpxH</name>
    <name type="ordered locus">EFER_0566</name>
</gene>
<proteinExistence type="inferred from homology"/>
<protein>
    <recommendedName>
        <fullName evidence="1">UDP-2,3-diacylglucosamine hydrolase</fullName>
        <ecNumber evidence="1">3.6.1.54</ecNumber>
    </recommendedName>
    <alternativeName>
        <fullName evidence="1">UDP-2,3-diacylglucosamine diphosphatase</fullName>
    </alternativeName>
</protein>
<reference key="1">
    <citation type="journal article" date="2009" name="PLoS Genet.">
        <title>Organised genome dynamics in the Escherichia coli species results in highly diverse adaptive paths.</title>
        <authorList>
            <person name="Touchon M."/>
            <person name="Hoede C."/>
            <person name="Tenaillon O."/>
            <person name="Barbe V."/>
            <person name="Baeriswyl S."/>
            <person name="Bidet P."/>
            <person name="Bingen E."/>
            <person name="Bonacorsi S."/>
            <person name="Bouchier C."/>
            <person name="Bouvet O."/>
            <person name="Calteau A."/>
            <person name="Chiapello H."/>
            <person name="Clermont O."/>
            <person name="Cruveiller S."/>
            <person name="Danchin A."/>
            <person name="Diard M."/>
            <person name="Dossat C."/>
            <person name="Karoui M.E."/>
            <person name="Frapy E."/>
            <person name="Garry L."/>
            <person name="Ghigo J.M."/>
            <person name="Gilles A.M."/>
            <person name="Johnson J."/>
            <person name="Le Bouguenec C."/>
            <person name="Lescat M."/>
            <person name="Mangenot S."/>
            <person name="Martinez-Jehanne V."/>
            <person name="Matic I."/>
            <person name="Nassif X."/>
            <person name="Oztas S."/>
            <person name="Petit M.A."/>
            <person name="Pichon C."/>
            <person name="Rouy Z."/>
            <person name="Ruf C.S."/>
            <person name="Schneider D."/>
            <person name="Tourret J."/>
            <person name="Vacherie B."/>
            <person name="Vallenet D."/>
            <person name="Medigue C."/>
            <person name="Rocha E.P.C."/>
            <person name="Denamur E."/>
        </authorList>
    </citation>
    <scope>NUCLEOTIDE SEQUENCE [LARGE SCALE GENOMIC DNA]</scope>
    <source>
        <strain>ATCC 35469 / DSM 13698 / BCRC 15582 / CCUG 18766 / IAM 14443 / JCM 21226 / LMG 7866 / NBRC 102419 / NCTC 12128 / CDC 0568-73</strain>
    </source>
</reference>
<dbReference type="EC" id="3.6.1.54" evidence="1"/>
<dbReference type="EMBL" id="CU928158">
    <property type="protein sequence ID" value="CAQ88113.1"/>
    <property type="molecule type" value="Genomic_DNA"/>
</dbReference>
<dbReference type="RefSeq" id="WP_000212257.1">
    <property type="nucleotide sequence ID" value="NC_011740.1"/>
</dbReference>
<dbReference type="SMR" id="B7LJI2"/>
<dbReference type="GeneID" id="75058373"/>
<dbReference type="KEGG" id="efe:EFER_0566"/>
<dbReference type="HOGENOM" id="CLU_074586_0_0_6"/>
<dbReference type="OrthoDB" id="9783283at2"/>
<dbReference type="UniPathway" id="UPA00359">
    <property type="reaction ID" value="UER00480"/>
</dbReference>
<dbReference type="Proteomes" id="UP000000745">
    <property type="component" value="Chromosome"/>
</dbReference>
<dbReference type="GO" id="GO:0005737">
    <property type="term" value="C:cytoplasm"/>
    <property type="evidence" value="ECO:0007669"/>
    <property type="project" value="InterPro"/>
</dbReference>
<dbReference type="GO" id="GO:0019897">
    <property type="term" value="C:extrinsic component of plasma membrane"/>
    <property type="evidence" value="ECO:0007669"/>
    <property type="project" value="UniProtKB-UniRule"/>
</dbReference>
<dbReference type="GO" id="GO:0030145">
    <property type="term" value="F:manganese ion binding"/>
    <property type="evidence" value="ECO:0007669"/>
    <property type="project" value="UniProtKB-UniRule"/>
</dbReference>
<dbReference type="GO" id="GO:0008758">
    <property type="term" value="F:UDP-2,3-diacylglucosamine hydrolase activity"/>
    <property type="evidence" value="ECO:0007669"/>
    <property type="project" value="UniProtKB-UniRule"/>
</dbReference>
<dbReference type="GO" id="GO:0009245">
    <property type="term" value="P:lipid A biosynthetic process"/>
    <property type="evidence" value="ECO:0007669"/>
    <property type="project" value="UniProtKB-UniRule"/>
</dbReference>
<dbReference type="CDD" id="cd07398">
    <property type="entry name" value="MPP_YbbF-LpxH"/>
    <property type="match status" value="1"/>
</dbReference>
<dbReference type="FunFam" id="3.60.21.10:FF:000012">
    <property type="entry name" value="UDP-2,3-diacylglucosamine hydrolase"/>
    <property type="match status" value="1"/>
</dbReference>
<dbReference type="Gene3D" id="3.60.21.10">
    <property type="match status" value="1"/>
</dbReference>
<dbReference type="HAMAP" id="MF_00575">
    <property type="entry name" value="LpxH"/>
    <property type="match status" value="1"/>
</dbReference>
<dbReference type="InterPro" id="IPR004843">
    <property type="entry name" value="Calcineurin-like_PHP_ApaH"/>
</dbReference>
<dbReference type="InterPro" id="IPR043461">
    <property type="entry name" value="LpxH-like"/>
</dbReference>
<dbReference type="InterPro" id="IPR029052">
    <property type="entry name" value="Metallo-depent_PP-like"/>
</dbReference>
<dbReference type="InterPro" id="IPR010138">
    <property type="entry name" value="UDP-diacylglucosamine_Hdrlase"/>
</dbReference>
<dbReference type="NCBIfam" id="TIGR01854">
    <property type="entry name" value="lipid_A_lpxH"/>
    <property type="match status" value="1"/>
</dbReference>
<dbReference type="NCBIfam" id="NF003743">
    <property type="entry name" value="PRK05340.1"/>
    <property type="match status" value="1"/>
</dbReference>
<dbReference type="PANTHER" id="PTHR34990:SF1">
    <property type="entry name" value="UDP-2,3-DIACYLGLUCOSAMINE HYDROLASE"/>
    <property type="match status" value="1"/>
</dbReference>
<dbReference type="PANTHER" id="PTHR34990">
    <property type="entry name" value="UDP-2,3-DIACYLGLUCOSAMINE HYDROLASE-RELATED"/>
    <property type="match status" value="1"/>
</dbReference>
<dbReference type="Pfam" id="PF00149">
    <property type="entry name" value="Metallophos"/>
    <property type="match status" value="1"/>
</dbReference>
<dbReference type="SUPFAM" id="SSF56300">
    <property type="entry name" value="Metallo-dependent phosphatases"/>
    <property type="match status" value="1"/>
</dbReference>
<feature type="chain" id="PRO_1000129525" description="UDP-2,3-diacylglucosamine hydrolase">
    <location>
        <begin position="1"/>
        <end position="240"/>
    </location>
</feature>
<feature type="binding site" evidence="1">
    <location>
        <position position="8"/>
    </location>
    <ligand>
        <name>Mn(2+)</name>
        <dbReference type="ChEBI" id="CHEBI:29035"/>
        <label>1</label>
    </ligand>
</feature>
<feature type="binding site" evidence="1">
    <location>
        <position position="10"/>
    </location>
    <ligand>
        <name>Mn(2+)</name>
        <dbReference type="ChEBI" id="CHEBI:29035"/>
        <label>1</label>
    </ligand>
</feature>
<feature type="binding site" evidence="1">
    <location>
        <position position="41"/>
    </location>
    <ligand>
        <name>Mn(2+)</name>
        <dbReference type="ChEBI" id="CHEBI:29035"/>
        <label>1</label>
    </ligand>
</feature>
<feature type="binding site" evidence="1">
    <location>
        <position position="41"/>
    </location>
    <ligand>
        <name>Mn(2+)</name>
        <dbReference type="ChEBI" id="CHEBI:29035"/>
        <label>2</label>
    </ligand>
</feature>
<feature type="binding site" evidence="1">
    <location>
        <begin position="79"/>
        <end position="80"/>
    </location>
    <ligand>
        <name>substrate</name>
    </ligand>
</feature>
<feature type="binding site" evidence="1">
    <location>
        <position position="79"/>
    </location>
    <ligand>
        <name>Mn(2+)</name>
        <dbReference type="ChEBI" id="CHEBI:29035"/>
        <label>2</label>
    </ligand>
</feature>
<feature type="binding site" evidence="1">
    <location>
        <position position="114"/>
    </location>
    <ligand>
        <name>Mn(2+)</name>
        <dbReference type="ChEBI" id="CHEBI:29035"/>
        <label>2</label>
    </ligand>
</feature>
<feature type="binding site" evidence="1">
    <location>
        <position position="122"/>
    </location>
    <ligand>
        <name>substrate</name>
    </ligand>
</feature>
<feature type="binding site" evidence="1">
    <location>
        <position position="160"/>
    </location>
    <ligand>
        <name>substrate</name>
    </ligand>
</feature>
<feature type="binding site" evidence="1">
    <location>
        <position position="164"/>
    </location>
    <ligand>
        <name>substrate</name>
    </ligand>
</feature>
<feature type="binding site" evidence="1">
    <location>
        <position position="167"/>
    </location>
    <ligand>
        <name>substrate</name>
    </ligand>
</feature>
<feature type="binding site" evidence="1">
    <location>
        <position position="195"/>
    </location>
    <ligand>
        <name>Mn(2+)</name>
        <dbReference type="ChEBI" id="CHEBI:29035"/>
        <label>2</label>
    </ligand>
</feature>
<feature type="binding site" evidence="1">
    <location>
        <position position="195"/>
    </location>
    <ligand>
        <name>substrate</name>
    </ligand>
</feature>
<feature type="binding site" evidence="1">
    <location>
        <position position="197"/>
    </location>
    <ligand>
        <name>Mn(2+)</name>
        <dbReference type="ChEBI" id="CHEBI:29035"/>
        <label>1</label>
    </ligand>
</feature>
<evidence type="ECO:0000255" key="1">
    <source>
        <dbReference type="HAMAP-Rule" id="MF_00575"/>
    </source>
</evidence>
<sequence>MATLFIADLHLCVEEPAITAGFLRFLAGEARKADALYILGDLFEAWIGDDDPNPLHRQMAAAIKAVSDSGVPCYFIHGNRDFLLGKRFARESGMTLLPEEKVLELYGRRVLIMHGDTLCTDDIGYQAFRAKVHKPWLQTLFLALPLFVRKRIAARMRANSKEANSSKSLAIMDVNQNAVVSAMEKHQVQWLIHGHTHRPAVHELIANQQPAFRVVLGAWHTEGSMVKVTADDVELIHFPF</sequence>
<accession>B7LJI2</accession>
<organism>
    <name type="scientific">Escherichia fergusonii (strain ATCC 35469 / DSM 13698 / CCUG 18766 / IAM 14443 / JCM 21226 / LMG 7866 / NBRC 102419 / NCTC 12128 / CDC 0568-73)</name>
    <dbReference type="NCBI Taxonomy" id="585054"/>
    <lineage>
        <taxon>Bacteria</taxon>
        <taxon>Pseudomonadati</taxon>
        <taxon>Pseudomonadota</taxon>
        <taxon>Gammaproteobacteria</taxon>
        <taxon>Enterobacterales</taxon>
        <taxon>Enterobacteriaceae</taxon>
        <taxon>Escherichia</taxon>
    </lineage>
</organism>